<evidence type="ECO:0000255" key="1">
    <source>
        <dbReference type="HAMAP-Rule" id="MF_00921"/>
    </source>
</evidence>
<gene>
    <name type="ordered locus">RL0001</name>
</gene>
<name>PDRP_RHIJ3</name>
<feature type="chain" id="PRO_0000316723" description="Putative pyruvate, phosphate dikinase regulatory protein">
    <location>
        <begin position="1"/>
        <end position="273"/>
    </location>
</feature>
<feature type="binding site" evidence="1">
    <location>
        <begin position="153"/>
        <end position="160"/>
    </location>
    <ligand>
        <name>ADP</name>
        <dbReference type="ChEBI" id="CHEBI:456216"/>
    </ligand>
</feature>
<dbReference type="EC" id="2.7.11.32" evidence="1"/>
<dbReference type="EC" id="2.7.4.27" evidence="1"/>
<dbReference type="EMBL" id="AM236080">
    <property type="protein sequence ID" value="CAK05489.1"/>
    <property type="molecule type" value="Genomic_DNA"/>
</dbReference>
<dbReference type="RefSeq" id="WP_011649834.1">
    <property type="nucleotide sequence ID" value="NC_008380.1"/>
</dbReference>
<dbReference type="SMR" id="Q1MNF6"/>
<dbReference type="EnsemblBacteria" id="CAK05489">
    <property type="protein sequence ID" value="CAK05489"/>
    <property type="gene ID" value="RL0001"/>
</dbReference>
<dbReference type="KEGG" id="rle:RL0001"/>
<dbReference type="eggNOG" id="COG1806">
    <property type="taxonomic scope" value="Bacteria"/>
</dbReference>
<dbReference type="HOGENOM" id="CLU_046206_2_0_5"/>
<dbReference type="Proteomes" id="UP000006575">
    <property type="component" value="Chromosome"/>
</dbReference>
<dbReference type="GO" id="GO:0043531">
    <property type="term" value="F:ADP binding"/>
    <property type="evidence" value="ECO:0007669"/>
    <property type="project" value="UniProtKB-UniRule"/>
</dbReference>
<dbReference type="GO" id="GO:0005524">
    <property type="term" value="F:ATP binding"/>
    <property type="evidence" value="ECO:0007669"/>
    <property type="project" value="InterPro"/>
</dbReference>
<dbReference type="GO" id="GO:0016776">
    <property type="term" value="F:phosphotransferase activity, phosphate group as acceptor"/>
    <property type="evidence" value="ECO:0007669"/>
    <property type="project" value="UniProtKB-UniRule"/>
</dbReference>
<dbReference type="GO" id="GO:0004674">
    <property type="term" value="F:protein serine/threonine kinase activity"/>
    <property type="evidence" value="ECO:0007669"/>
    <property type="project" value="UniProtKB-UniRule"/>
</dbReference>
<dbReference type="HAMAP" id="MF_00921">
    <property type="entry name" value="PDRP"/>
    <property type="match status" value="1"/>
</dbReference>
<dbReference type="InterPro" id="IPR005177">
    <property type="entry name" value="Kinase-pyrophosphorylase"/>
</dbReference>
<dbReference type="InterPro" id="IPR026565">
    <property type="entry name" value="PPDK_reg"/>
</dbReference>
<dbReference type="NCBIfam" id="NF003742">
    <property type="entry name" value="PRK05339.1"/>
    <property type="match status" value="1"/>
</dbReference>
<dbReference type="PANTHER" id="PTHR31756">
    <property type="entry name" value="PYRUVATE, PHOSPHATE DIKINASE REGULATORY PROTEIN 1, CHLOROPLASTIC"/>
    <property type="match status" value="1"/>
</dbReference>
<dbReference type="PANTHER" id="PTHR31756:SF3">
    <property type="entry name" value="PYRUVATE, PHOSPHATE DIKINASE REGULATORY PROTEIN 1, CHLOROPLASTIC"/>
    <property type="match status" value="1"/>
</dbReference>
<dbReference type="Pfam" id="PF03618">
    <property type="entry name" value="Kinase-PPPase"/>
    <property type="match status" value="1"/>
</dbReference>
<protein>
    <recommendedName>
        <fullName evidence="1">Putative pyruvate, phosphate dikinase regulatory protein</fullName>
        <shortName evidence="1">PPDK regulatory protein</shortName>
        <ecNumber evidence="1">2.7.11.32</ecNumber>
        <ecNumber evidence="1">2.7.4.27</ecNumber>
    </recommendedName>
</protein>
<reference key="1">
    <citation type="journal article" date="2006" name="Genome Biol.">
        <title>The genome of Rhizobium leguminosarum has recognizable core and accessory components.</title>
        <authorList>
            <person name="Young J.P.W."/>
            <person name="Crossman L.C."/>
            <person name="Johnston A.W.B."/>
            <person name="Thomson N.R."/>
            <person name="Ghazoui Z.F."/>
            <person name="Hull K.H."/>
            <person name="Wexler M."/>
            <person name="Curson A.R.J."/>
            <person name="Todd J.D."/>
            <person name="Poole P.S."/>
            <person name="Mauchline T.H."/>
            <person name="East A.K."/>
            <person name="Quail M.A."/>
            <person name="Churcher C."/>
            <person name="Arrowsmith C."/>
            <person name="Cherevach I."/>
            <person name="Chillingworth T."/>
            <person name="Clarke K."/>
            <person name="Cronin A."/>
            <person name="Davis P."/>
            <person name="Fraser A."/>
            <person name="Hance Z."/>
            <person name="Hauser H."/>
            <person name="Jagels K."/>
            <person name="Moule S."/>
            <person name="Mungall K."/>
            <person name="Norbertczak H."/>
            <person name="Rabbinowitsch E."/>
            <person name="Sanders M."/>
            <person name="Simmonds M."/>
            <person name="Whitehead S."/>
            <person name="Parkhill J."/>
        </authorList>
    </citation>
    <scope>NUCLEOTIDE SEQUENCE [LARGE SCALE GENOMIC DNA]</scope>
    <source>
        <strain>DSM 114642 / LMG 32736 / 3841</strain>
    </source>
</reference>
<keyword id="KW-0418">Kinase</keyword>
<keyword id="KW-0547">Nucleotide-binding</keyword>
<keyword id="KW-0723">Serine/threonine-protein kinase</keyword>
<keyword id="KW-0808">Transferase</keyword>
<proteinExistence type="inferred from homology"/>
<sequence length="273" mass="30440">MENRTNFFHLHLISDSTGETLISAGRAASAQFRSAQPIEHVYPLIRNRKQLLPVLQAIDDAPGIVLYTIVDRELASLIDERCIEMGVASVNVLEPVMNAFQIYLGAPSRRRVGAQHVMNAGYFARIEALNFTMDHDDGQMPDDYNDADVVIIGISRTSKTPTSIYLANRGIKTANIPIVYGVPLPESLFVASKPLIVCLIATTDRISQVRENRVLGVTQGFDREHYTDRAAISEELKYARSLCARHNWPLIDVTRRSIEETAAAIVALRPKLR</sequence>
<organism>
    <name type="scientific">Rhizobium johnstonii (strain DSM 114642 / LMG 32736 / 3841)</name>
    <name type="common">Rhizobium leguminosarum bv. viciae</name>
    <dbReference type="NCBI Taxonomy" id="216596"/>
    <lineage>
        <taxon>Bacteria</taxon>
        <taxon>Pseudomonadati</taxon>
        <taxon>Pseudomonadota</taxon>
        <taxon>Alphaproteobacteria</taxon>
        <taxon>Hyphomicrobiales</taxon>
        <taxon>Rhizobiaceae</taxon>
        <taxon>Rhizobium/Agrobacterium group</taxon>
        <taxon>Rhizobium</taxon>
        <taxon>Rhizobium johnstonii</taxon>
    </lineage>
</organism>
<accession>Q1MNF6</accession>
<comment type="function">
    <text evidence="1">Bifunctional serine/threonine kinase and phosphorylase involved in the regulation of the pyruvate, phosphate dikinase (PPDK) by catalyzing its phosphorylation/dephosphorylation.</text>
</comment>
<comment type="catalytic activity">
    <reaction evidence="1">
        <text>N(tele)-phospho-L-histidyl/L-threonyl-[pyruvate, phosphate dikinase] + ADP = N(tele)-phospho-L-histidyl/O-phospho-L-threonyl-[pyruvate, phosphate dikinase] + AMP + H(+)</text>
        <dbReference type="Rhea" id="RHEA:43692"/>
        <dbReference type="Rhea" id="RHEA-COMP:10650"/>
        <dbReference type="Rhea" id="RHEA-COMP:10651"/>
        <dbReference type="ChEBI" id="CHEBI:15378"/>
        <dbReference type="ChEBI" id="CHEBI:30013"/>
        <dbReference type="ChEBI" id="CHEBI:61977"/>
        <dbReference type="ChEBI" id="CHEBI:83586"/>
        <dbReference type="ChEBI" id="CHEBI:456215"/>
        <dbReference type="ChEBI" id="CHEBI:456216"/>
        <dbReference type="EC" id="2.7.11.32"/>
    </reaction>
</comment>
<comment type="catalytic activity">
    <reaction evidence="1">
        <text>N(tele)-phospho-L-histidyl/O-phospho-L-threonyl-[pyruvate, phosphate dikinase] + phosphate + H(+) = N(tele)-phospho-L-histidyl/L-threonyl-[pyruvate, phosphate dikinase] + diphosphate</text>
        <dbReference type="Rhea" id="RHEA:43696"/>
        <dbReference type="Rhea" id="RHEA-COMP:10650"/>
        <dbReference type="Rhea" id="RHEA-COMP:10651"/>
        <dbReference type="ChEBI" id="CHEBI:15378"/>
        <dbReference type="ChEBI" id="CHEBI:30013"/>
        <dbReference type="ChEBI" id="CHEBI:33019"/>
        <dbReference type="ChEBI" id="CHEBI:43474"/>
        <dbReference type="ChEBI" id="CHEBI:61977"/>
        <dbReference type="ChEBI" id="CHEBI:83586"/>
        <dbReference type="EC" id="2.7.4.27"/>
    </reaction>
</comment>
<comment type="similarity">
    <text evidence="1">Belongs to the pyruvate, phosphate/water dikinase regulatory protein family. PDRP subfamily.</text>
</comment>